<protein>
    <recommendedName>
        <fullName evidence="6">Glutathione-independent glyoxalase DJ-1</fullName>
        <ecNumber evidence="4 5">4.2.1.130</ecNumber>
    </recommendedName>
    <alternativeName>
        <fullName evidence="1">Heat shock protein 31 homolog 6</fullName>
    </alternativeName>
    <alternativeName>
        <fullName>Protein DJ-1 homolog</fullName>
    </alternativeName>
</protein>
<proteinExistence type="evidence at protein level"/>
<keyword id="KW-0002">3D-structure</keyword>
<keyword id="KW-0963">Cytoplasm</keyword>
<keyword id="KW-0456">Lyase</keyword>
<keyword id="KW-0539">Nucleus</keyword>
<keyword id="KW-1185">Reference proteome</keyword>
<keyword id="KW-0346">Stress response</keyword>
<organism>
    <name type="scientific">Schizosaccharomyces pombe (strain 972 / ATCC 24843)</name>
    <name type="common">Fission yeast</name>
    <dbReference type="NCBI Taxonomy" id="284812"/>
    <lineage>
        <taxon>Eukaryota</taxon>
        <taxon>Fungi</taxon>
        <taxon>Dikarya</taxon>
        <taxon>Ascomycota</taxon>
        <taxon>Taphrinomycotina</taxon>
        <taxon>Schizosaccharomycetes</taxon>
        <taxon>Schizosaccharomycetales</taxon>
        <taxon>Schizosaccharomycetaceae</taxon>
        <taxon>Schizosaccharomyces</taxon>
    </lineage>
</organism>
<gene>
    <name evidence="9" type="primary">hsp3106</name>
    <name evidence="6" type="synonym">spDJ-1</name>
    <name evidence="9" type="ORF">SPAC22E12.03c</name>
</gene>
<feature type="chain" id="PRO_0000157857" description="Glutathione-independent glyoxalase DJ-1">
    <location>
        <begin position="1"/>
        <end position="191"/>
    </location>
</feature>
<feature type="active site" evidence="8">
    <location>
        <position position="16"/>
    </location>
</feature>
<feature type="active site" evidence="8">
    <location>
        <position position="111"/>
    </location>
</feature>
<feature type="active site" evidence="8">
    <location>
        <position position="130"/>
    </location>
</feature>
<feature type="mutagenesis site" description="Nearly completely abolishes enzymatic activity." evidence="5">
    <original>E</original>
    <variation>A</variation>
    <location>
        <position position="16"/>
    </location>
</feature>
<feature type="mutagenesis site" description="Nearly completely abolishes enzymatic activity." evidence="5">
    <original>C</original>
    <variation>A</variation>
    <location>
        <position position="111"/>
    </location>
</feature>
<feature type="mutagenesis site" description="Leads to 5- to 6-fold reduction in catalytic efficiency." evidence="5">
    <original>H</original>
    <variation>A</variation>
    <location>
        <position position="130"/>
    </location>
</feature>
<feature type="strand" evidence="10">
    <location>
        <begin position="4"/>
        <end position="9"/>
    </location>
</feature>
<feature type="helix" evidence="10">
    <location>
        <begin position="14"/>
        <end position="26"/>
    </location>
</feature>
<feature type="strand" evidence="10">
    <location>
        <begin position="31"/>
        <end position="38"/>
    </location>
</feature>
<feature type="strand" evidence="10">
    <location>
        <begin position="43"/>
        <end position="45"/>
    </location>
</feature>
<feature type="strand" evidence="10">
    <location>
        <begin position="51"/>
        <end position="53"/>
    </location>
</feature>
<feature type="strand" evidence="10">
    <location>
        <begin position="55"/>
        <end position="57"/>
    </location>
</feature>
<feature type="helix" evidence="10">
    <location>
        <begin position="58"/>
        <end position="60"/>
    </location>
</feature>
<feature type="helix" evidence="10">
    <location>
        <begin position="64"/>
        <end position="70"/>
    </location>
</feature>
<feature type="strand" evidence="10">
    <location>
        <begin position="72"/>
        <end position="76"/>
    </location>
</feature>
<feature type="helix" evidence="10">
    <location>
        <begin position="80"/>
        <end position="87"/>
    </location>
</feature>
<feature type="helix" evidence="10">
    <location>
        <begin position="90"/>
        <end position="99"/>
    </location>
</feature>
<feature type="strand" evidence="10">
    <location>
        <begin position="106"/>
        <end position="110"/>
    </location>
</feature>
<feature type="helix" evidence="10">
    <location>
        <begin position="111"/>
        <end position="114"/>
    </location>
</feature>
<feature type="helix" evidence="10">
    <location>
        <begin position="115"/>
        <end position="119"/>
    </location>
</feature>
<feature type="strand" evidence="10">
    <location>
        <begin position="125"/>
        <end position="127"/>
    </location>
</feature>
<feature type="helix" evidence="10">
    <location>
        <begin position="131"/>
        <end position="133"/>
    </location>
</feature>
<feature type="helix" evidence="10">
    <location>
        <begin position="134"/>
        <end position="139"/>
    </location>
</feature>
<feature type="strand" evidence="10">
    <location>
        <begin position="147"/>
        <end position="152"/>
    </location>
</feature>
<feature type="strand" evidence="10">
    <location>
        <begin position="155"/>
        <end position="158"/>
    </location>
</feature>
<feature type="helix" evidence="10">
    <location>
        <begin position="161"/>
        <end position="163"/>
    </location>
</feature>
<feature type="helix" evidence="10">
    <location>
        <begin position="164"/>
        <end position="175"/>
    </location>
</feature>
<feature type="helix" evidence="10">
    <location>
        <begin position="178"/>
        <end position="187"/>
    </location>
</feature>
<accession>Q10356</accession>
<dbReference type="EC" id="4.2.1.130" evidence="4 5"/>
<dbReference type="EMBL" id="CU329670">
    <property type="protein sequence ID" value="CAA93890.1"/>
    <property type="molecule type" value="Genomic_DNA"/>
</dbReference>
<dbReference type="PIR" id="T38160">
    <property type="entry name" value="T38160"/>
</dbReference>
<dbReference type="RefSeq" id="NP_594829.1">
    <property type="nucleotide sequence ID" value="NM_001020258.2"/>
</dbReference>
<dbReference type="PDB" id="4GE0">
    <property type="method" value="X-ray"/>
    <property type="resolution" value="1.45 A"/>
    <property type="chains" value="A/B/C/D=1-191"/>
</dbReference>
<dbReference type="PDB" id="4GE3">
    <property type="method" value="X-ray"/>
    <property type="resolution" value="1.50 A"/>
    <property type="chains" value="A/B/C/D=1-191"/>
</dbReference>
<dbReference type="PDB" id="4QYT">
    <property type="method" value="X-ray"/>
    <property type="resolution" value="1.05 A"/>
    <property type="chains" value="A/B/C/D=1-191"/>
</dbReference>
<dbReference type="PDBsum" id="4GE0"/>
<dbReference type="PDBsum" id="4GE3"/>
<dbReference type="PDBsum" id="4QYT"/>
<dbReference type="SMR" id="Q10356"/>
<dbReference type="BioGRID" id="278266">
    <property type="interactions" value="145"/>
</dbReference>
<dbReference type="FunCoup" id="Q10356">
    <property type="interactions" value="262"/>
</dbReference>
<dbReference type="MINT" id="Q10356"/>
<dbReference type="STRING" id="284812.Q10356"/>
<dbReference type="iPTMnet" id="Q10356"/>
<dbReference type="PaxDb" id="4896-SPAC22E12.03c.1"/>
<dbReference type="EnsemblFungi" id="SPAC22E12.03c.1">
    <property type="protein sequence ID" value="SPAC22E12.03c.1:pep"/>
    <property type="gene ID" value="SPAC22E12.03c"/>
</dbReference>
<dbReference type="GeneID" id="2541772"/>
<dbReference type="KEGG" id="spo:2541772"/>
<dbReference type="PomBase" id="SPAC22E12.03c">
    <property type="gene designation" value="hsp3106"/>
</dbReference>
<dbReference type="VEuPathDB" id="FungiDB:SPAC22E12.03c"/>
<dbReference type="eggNOG" id="KOG2764">
    <property type="taxonomic scope" value="Eukaryota"/>
</dbReference>
<dbReference type="HOGENOM" id="CLU_000445_44_2_1"/>
<dbReference type="InParanoid" id="Q10356"/>
<dbReference type="OMA" id="KATCYPG"/>
<dbReference type="PhylomeDB" id="Q10356"/>
<dbReference type="BRENDA" id="4.2.1.130">
    <property type="organism ID" value="5613"/>
</dbReference>
<dbReference type="Reactome" id="R-SPO-3899300">
    <property type="pathway name" value="SUMOylation of transcription cofactors"/>
</dbReference>
<dbReference type="Reactome" id="R-SPO-9646399">
    <property type="pathway name" value="Aggrephagy"/>
</dbReference>
<dbReference type="EvolutionaryTrace" id="Q10356"/>
<dbReference type="PRO" id="PR:Q10356"/>
<dbReference type="Proteomes" id="UP000002485">
    <property type="component" value="Chromosome I"/>
</dbReference>
<dbReference type="GO" id="GO:0005737">
    <property type="term" value="C:cytoplasm"/>
    <property type="evidence" value="ECO:0000314"/>
    <property type="project" value="PomBase"/>
</dbReference>
<dbReference type="GO" id="GO:0005829">
    <property type="term" value="C:cytosol"/>
    <property type="evidence" value="ECO:0000314"/>
    <property type="project" value="PomBase"/>
</dbReference>
<dbReference type="GO" id="GO:0005739">
    <property type="term" value="C:mitochondrion"/>
    <property type="evidence" value="ECO:0000318"/>
    <property type="project" value="GO_Central"/>
</dbReference>
<dbReference type="GO" id="GO:0005634">
    <property type="term" value="C:nucleus"/>
    <property type="evidence" value="ECO:0000314"/>
    <property type="project" value="PomBase"/>
</dbReference>
<dbReference type="GO" id="GO:0019172">
    <property type="term" value="F:glyoxalase III activity"/>
    <property type="evidence" value="ECO:0000314"/>
    <property type="project" value="PomBase"/>
</dbReference>
<dbReference type="GO" id="GO:1990748">
    <property type="term" value="P:cellular detoxification"/>
    <property type="evidence" value="ECO:0000303"/>
    <property type="project" value="PomBase"/>
</dbReference>
<dbReference type="GO" id="GO:1903189">
    <property type="term" value="P:glyoxal metabolic process"/>
    <property type="evidence" value="ECO:0000318"/>
    <property type="project" value="GO_Central"/>
</dbReference>
<dbReference type="GO" id="GO:0006979">
    <property type="term" value="P:response to oxidative stress"/>
    <property type="evidence" value="ECO:0000318"/>
    <property type="project" value="GO_Central"/>
</dbReference>
<dbReference type="CDD" id="cd03135">
    <property type="entry name" value="GATase1_DJ-1"/>
    <property type="match status" value="1"/>
</dbReference>
<dbReference type="FunFam" id="3.40.50.880:FF:000190">
    <property type="entry name" value="Glutathione-independent glyoxalase DJ-1"/>
    <property type="match status" value="1"/>
</dbReference>
<dbReference type="Gene3D" id="3.40.50.880">
    <property type="match status" value="1"/>
</dbReference>
<dbReference type="InterPro" id="IPR029062">
    <property type="entry name" value="Class_I_gatase-like"/>
</dbReference>
<dbReference type="InterPro" id="IPR002818">
    <property type="entry name" value="DJ-1/PfpI"/>
</dbReference>
<dbReference type="InterPro" id="IPR050325">
    <property type="entry name" value="Prot/Nucl_acid_deglycase"/>
</dbReference>
<dbReference type="PANTHER" id="PTHR48094:SF12">
    <property type="entry name" value="PARKINSON DISEASE PROTEIN 7 HOMOLOG"/>
    <property type="match status" value="1"/>
</dbReference>
<dbReference type="PANTHER" id="PTHR48094">
    <property type="entry name" value="PROTEIN/NUCLEIC ACID DEGLYCASE DJ-1-RELATED"/>
    <property type="match status" value="1"/>
</dbReference>
<dbReference type="Pfam" id="PF01965">
    <property type="entry name" value="DJ-1_PfpI"/>
    <property type="match status" value="1"/>
</dbReference>
<dbReference type="SUPFAM" id="SSF52317">
    <property type="entry name" value="Class I glutamine amidotransferase-like"/>
    <property type="match status" value="1"/>
</dbReference>
<sequence length="191" mass="21078">MVKVCLFVADGTDEIEFSAPWGIFKRAEIPIDSVYVGENKDRLVKMSRDVEMYANRSYKEIPSADDFAKQYDIAIIPGGGLGAKTLSTTPFVQQVVKEFYKKPNKWIGMICAGTLTAKTSGLPNKQITGHPSVRGQLEEGGYKYLDQPVVLEENLITSQGPGTAMLFGLKLLEQVASKDKYNAVYKSLSMP</sequence>
<evidence type="ECO:0000250" key="1">
    <source>
        <dbReference type="UniProtKB" id="O74914"/>
    </source>
</evidence>
<evidence type="ECO:0000250" key="2">
    <source>
        <dbReference type="UniProtKB" id="Q04432"/>
    </source>
</evidence>
<evidence type="ECO:0000269" key="3">
    <source>
    </source>
</evidence>
<evidence type="ECO:0000269" key="4">
    <source>
    </source>
</evidence>
<evidence type="ECO:0000269" key="5">
    <source>
    </source>
</evidence>
<evidence type="ECO:0000303" key="6">
    <source>
    </source>
</evidence>
<evidence type="ECO:0000305" key="7"/>
<evidence type="ECO:0000305" key="8">
    <source>
    </source>
</evidence>
<evidence type="ECO:0000312" key="9">
    <source>
        <dbReference type="PomBase" id="SPAC22E12.03c"/>
    </source>
</evidence>
<evidence type="ECO:0007829" key="10">
    <source>
        <dbReference type="PDB" id="4QYT"/>
    </source>
</evidence>
<name>DJ1_SCHPO</name>
<reference key="1">
    <citation type="journal article" date="2002" name="Nature">
        <title>The genome sequence of Schizosaccharomyces pombe.</title>
        <authorList>
            <person name="Wood V."/>
            <person name="Gwilliam R."/>
            <person name="Rajandream M.A."/>
            <person name="Lyne M.H."/>
            <person name="Lyne R."/>
            <person name="Stewart A."/>
            <person name="Sgouros J.G."/>
            <person name="Peat N."/>
            <person name="Hayles J."/>
            <person name="Baker S.G."/>
            <person name="Basham D."/>
            <person name="Bowman S."/>
            <person name="Brooks K."/>
            <person name="Brown D."/>
            <person name="Brown S."/>
            <person name="Chillingworth T."/>
            <person name="Churcher C.M."/>
            <person name="Collins M."/>
            <person name="Connor R."/>
            <person name="Cronin A."/>
            <person name="Davis P."/>
            <person name="Feltwell T."/>
            <person name="Fraser A."/>
            <person name="Gentles S."/>
            <person name="Goble A."/>
            <person name="Hamlin N."/>
            <person name="Harris D.E."/>
            <person name="Hidalgo J."/>
            <person name="Hodgson G."/>
            <person name="Holroyd S."/>
            <person name="Hornsby T."/>
            <person name="Howarth S."/>
            <person name="Huckle E.J."/>
            <person name="Hunt S."/>
            <person name="Jagels K."/>
            <person name="James K.D."/>
            <person name="Jones L."/>
            <person name="Jones M."/>
            <person name="Leather S."/>
            <person name="McDonald S."/>
            <person name="McLean J."/>
            <person name="Mooney P."/>
            <person name="Moule S."/>
            <person name="Mungall K.L."/>
            <person name="Murphy L.D."/>
            <person name="Niblett D."/>
            <person name="Odell C."/>
            <person name="Oliver K."/>
            <person name="O'Neil S."/>
            <person name="Pearson D."/>
            <person name="Quail M.A."/>
            <person name="Rabbinowitsch E."/>
            <person name="Rutherford K.M."/>
            <person name="Rutter S."/>
            <person name="Saunders D."/>
            <person name="Seeger K."/>
            <person name="Sharp S."/>
            <person name="Skelton J."/>
            <person name="Simmonds M.N."/>
            <person name="Squares R."/>
            <person name="Squares S."/>
            <person name="Stevens K."/>
            <person name="Taylor K."/>
            <person name="Taylor R.G."/>
            <person name="Tivey A."/>
            <person name="Walsh S.V."/>
            <person name="Warren T."/>
            <person name="Whitehead S."/>
            <person name="Woodward J.R."/>
            <person name="Volckaert G."/>
            <person name="Aert R."/>
            <person name="Robben J."/>
            <person name="Grymonprez B."/>
            <person name="Weltjens I."/>
            <person name="Vanstreels E."/>
            <person name="Rieger M."/>
            <person name="Schaefer M."/>
            <person name="Mueller-Auer S."/>
            <person name="Gabel C."/>
            <person name="Fuchs M."/>
            <person name="Duesterhoeft A."/>
            <person name="Fritzc C."/>
            <person name="Holzer E."/>
            <person name="Moestl D."/>
            <person name="Hilbert H."/>
            <person name="Borzym K."/>
            <person name="Langer I."/>
            <person name="Beck A."/>
            <person name="Lehrach H."/>
            <person name="Reinhardt R."/>
            <person name="Pohl T.M."/>
            <person name="Eger P."/>
            <person name="Zimmermann W."/>
            <person name="Wedler H."/>
            <person name="Wambutt R."/>
            <person name="Purnelle B."/>
            <person name="Goffeau A."/>
            <person name="Cadieu E."/>
            <person name="Dreano S."/>
            <person name="Gloux S."/>
            <person name="Lelaure V."/>
            <person name="Mottier S."/>
            <person name="Galibert F."/>
            <person name="Aves S.J."/>
            <person name="Xiang Z."/>
            <person name="Hunt C."/>
            <person name="Moore K."/>
            <person name="Hurst S.M."/>
            <person name="Lucas M."/>
            <person name="Rochet M."/>
            <person name="Gaillardin C."/>
            <person name="Tallada V.A."/>
            <person name="Garzon A."/>
            <person name="Thode G."/>
            <person name="Daga R.R."/>
            <person name="Cruzado L."/>
            <person name="Jimenez J."/>
            <person name="Sanchez M."/>
            <person name="del Rey F."/>
            <person name="Benito J."/>
            <person name="Dominguez A."/>
            <person name="Revuelta J.L."/>
            <person name="Moreno S."/>
            <person name="Armstrong J."/>
            <person name="Forsburg S.L."/>
            <person name="Cerutti L."/>
            <person name="Lowe T."/>
            <person name="McCombie W.R."/>
            <person name="Paulsen I."/>
            <person name="Potashkin J."/>
            <person name="Shpakovski G.V."/>
            <person name="Ussery D."/>
            <person name="Barrell B.G."/>
            <person name="Nurse P."/>
        </authorList>
    </citation>
    <scope>NUCLEOTIDE SEQUENCE [LARGE SCALE GENOMIC DNA]</scope>
    <source>
        <strain>972 / ATCC 24843</strain>
    </source>
</reference>
<reference key="2">
    <citation type="journal article" date="2006" name="Nat. Biotechnol.">
        <title>ORFeome cloning and global analysis of protein localization in the fission yeast Schizosaccharomyces pombe.</title>
        <authorList>
            <person name="Matsuyama A."/>
            <person name="Arai R."/>
            <person name="Yashiroda Y."/>
            <person name="Shirai A."/>
            <person name="Kamata A."/>
            <person name="Sekido S."/>
            <person name="Kobayashi Y."/>
            <person name="Hashimoto A."/>
            <person name="Hamamoto M."/>
            <person name="Hiraoka Y."/>
            <person name="Horinouchi S."/>
            <person name="Yoshida M."/>
        </authorList>
    </citation>
    <scope>SUBCELLULAR LOCATION [LARGE SCALE ANALYSIS]</scope>
</reference>
<reference key="3">
    <citation type="journal article" date="2014" name="BMC Evol. Biol.">
        <title>Identification of glutathione (GSH)-independent glyoxalase III from Schizosaccharomyces pombe.</title>
        <authorList>
            <person name="Zhao Q."/>
            <person name="Su Y."/>
            <person name="Wang Z."/>
            <person name="Chen C."/>
            <person name="Wu T."/>
            <person name="Huang Y."/>
        </authorList>
    </citation>
    <scope>CATALYTIC ACTIVITY</scope>
    <scope>BIOPHYSICOCHEMICAL PROPERTIES</scope>
    <scope>SUBCELLULAR LOCATION</scope>
    <scope>MUTAGENESIS OF GLU-16; CYS-111 AND HIS-130</scope>
</reference>
<reference key="4">
    <citation type="journal article" date="2014" name="J. Biol. Chem.">
        <title>A glutathione-independent glyoxalase of the DJ-1 superfamily plays an important role in managing metabolically generated methylglyoxal in Candida albicans.</title>
        <authorList>
            <person name="Hasim S."/>
            <person name="Hussin N.A."/>
            <person name="Alomar F."/>
            <person name="Bidasee K.R."/>
            <person name="Nickerson K.W."/>
            <person name="Wilson M.A."/>
        </authorList>
    </citation>
    <scope>CATALYTIC ACTIVITY</scope>
</reference>
<reference key="5">
    <citation type="journal article" date="2012" name="FEBS J.">
        <title>Influence of peptide dipoles and hydrogen bonds on reactive cysteine pKa values in fission yeast DJ-1.</title>
        <authorList>
            <person name="Madzelan P."/>
            <person name="Labunska T."/>
            <person name="Wilson M.A."/>
        </authorList>
    </citation>
    <scope>X-RAY CRYSTALLOGRAPHY (1.05 ANGSTROMS)</scope>
</reference>
<comment type="function">
    <text evidence="2 5">Catalyzes the conversion of methylglyoxal (MG) to D-lactate in a single glutathione (GSH)-independent step (PubMed:24758716). May play a role in detoxifying endogenously produced glyoxals. Involved in protection against reactive oxygen species (ROS) (By similarity).</text>
</comment>
<comment type="catalytic activity">
    <reaction evidence="4 5">
        <text>methylglyoxal + H2O = (R)-lactate + H(+)</text>
        <dbReference type="Rhea" id="RHEA:27754"/>
        <dbReference type="ChEBI" id="CHEBI:15377"/>
        <dbReference type="ChEBI" id="CHEBI:15378"/>
        <dbReference type="ChEBI" id="CHEBI:16004"/>
        <dbReference type="ChEBI" id="CHEBI:17158"/>
        <dbReference type="EC" id="4.2.1.130"/>
    </reaction>
</comment>
<comment type="biophysicochemical properties">
    <kinetics>
        <KM evidence="5">10.8 mM for methylglyoxal</KM>
        <text evidence="5">kcat is 85.7 min(-1) with methylglyoxal as substrate.</text>
    </kinetics>
</comment>
<comment type="subcellular location">
    <subcellularLocation>
        <location evidence="3 5">Cytoplasm</location>
    </subcellularLocation>
    <subcellularLocation>
        <location evidence="3 5">Nucleus</location>
    </subcellularLocation>
</comment>
<comment type="similarity">
    <text evidence="7">Belongs to the peptidase C56 family.</text>
</comment>